<accession>A8AJ15</accession>
<sequence length="506" mass="53989">MNTLTLTPGHLSFAQLRAVWQQPVQLRLDSSAVDGINASVDCVNNIVAEGRTAYGINTGFGLLAQTRIATEDLQNLQRSLVLSHAAGIGEPLDDAMVRLIMVLKINSLARGFSGIRLSVIEALIALVNAEVWPLIPAKGSVGASGDLAPLAHMSLTLLGEGKARWQGEWLPAKEALKKAGLEPITLAAKEGLALLNGTQASTAFALRGLFEAQALFASAVVCGALTTEAVLGSRRPFDARIHAARGQRGQIDAAGLFRHVLTETSAIAQSHHNCEKVQDPYSLRCQPQVMGACLTQLRQAMEVLLVEANAVSDNPLVFAEEGDVISGGNFHAEPVAMAADNLALAIAEIGALSERRIALMMDKHMSQLPPFLVKNGGVNSGFMIAQVTAAALASENKALAHPHSVDSLPTSANQEDHVSMAPAAGRRLWEMAANTRGVIAVEWLAACQGIDLREGLTSSPLLEQARKALREQVPHYTQDRFFAPDIECATELLARGDLFRLLPDFL</sequence>
<comment type="catalytic activity">
    <reaction evidence="1">
        <text>L-histidine = trans-urocanate + NH4(+)</text>
        <dbReference type="Rhea" id="RHEA:21232"/>
        <dbReference type="ChEBI" id="CHEBI:17771"/>
        <dbReference type="ChEBI" id="CHEBI:28938"/>
        <dbReference type="ChEBI" id="CHEBI:57595"/>
        <dbReference type="EC" id="4.3.1.3"/>
    </reaction>
</comment>
<comment type="pathway">
    <text evidence="1">Amino-acid degradation; L-histidine degradation into L-glutamate; N-formimidoyl-L-glutamate from L-histidine: step 1/3.</text>
</comment>
<comment type="subcellular location">
    <subcellularLocation>
        <location evidence="1">Cytoplasm</location>
    </subcellularLocation>
</comment>
<comment type="PTM">
    <text evidence="1">Contains an active site 4-methylidene-imidazol-5-one (MIO), which is formed autocatalytically by cyclization and dehydration of residues Ala-Ser-Gly.</text>
</comment>
<comment type="similarity">
    <text evidence="1">Belongs to the PAL/histidase family.</text>
</comment>
<gene>
    <name evidence="1" type="primary">hutH</name>
    <name type="ordered locus">CKO_02356</name>
</gene>
<proteinExistence type="inferred from homology"/>
<name>HUTH_CITK8</name>
<feature type="chain" id="PRO_1000021556" description="Histidine ammonia-lyase">
    <location>
        <begin position="1"/>
        <end position="506"/>
    </location>
</feature>
<feature type="modified residue" description="2,3-didehydroalanine (Ser)" evidence="1">
    <location>
        <position position="144"/>
    </location>
</feature>
<feature type="cross-link" description="5-imidazolinone (Ala-Gly)" evidence="1">
    <location>
        <begin position="143"/>
        <end position="145"/>
    </location>
</feature>
<organism>
    <name type="scientific">Citrobacter koseri (strain ATCC BAA-895 / CDC 4225-83 / SGSC4696)</name>
    <dbReference type="NCBI Taxonomy" id="290338"/>
    <lineage>
        <taxon>Bacteria</taxon>
        <taxon>Pseudomonadati</taxon>
        <taxon>Pseudomonadota</taxon>
        <taxon>Gammaproteobacteria</taxon>
        <taxon>Enterobacterales</taxon>
        <taxon>Enterobacteriaceae</taxon>
        <taxon>Citrobacter</taxon>
    </lineage>
</organism>
<dbReference type="EC" id="4.3.1.3" evidence="1"/>
<dbReference type="EMBL" id="CP000822">
    <property type="protein sequence ID" value="ABV13478.1"/>
    <property type="molecule type" value="Genomic_DNA"/>
</dbReference>
<dbReference type="RefSeq" id="WP_012133205.1">
    <property type="nucleotide sequence ID" value="NC_009792.1"/>
</dbReference>
<dbReference type="SMR" id="A8AJ15"/>
<dbReference type="STRING" id="290338.CKO_02356"/>
<dbReference type="GeneID" id="45136259"/>
<dbReference type="KEGG" id="cko:CKO_02356"/>
<dbReference type="HOGENOM" id="CLU_014801_4_0_6"/>
<dbReference type="OrthoDB" id="9806955at2"/>
<dbReference type="UniPathway" id="UPA00379">
    <property type="reaction ID" value="UER00549"/>
</dbReference>
<dbReference type="Proteomes" id="UP000008148">
    <property type="component" value="Chromosome"/>
</dbReference>
<dbReference type="GO" id="GO:0005737">
    <property type="term" value="C:cytoplasm"/>
    <property type="evidence" value="ECO:0007669"/>
    <property type="project" value="UniProtKB-SubCell"/>
</dbReference>
<dbReference type="GO" id="GO:0004397">
    <property type="term" value="F:histidine ammonia-lyase activity"/>
    <property type="evidence" value="ECO:0007669"/>
    <property type="project" value="UniProtKB-UniRule"/>
</dbReference>
<dbReference type="GO" id="GO:0019556">
    <property type="term" value="P:L-histidine catabolic process to glutamate and formamide"/>
    <property type="evidence" value="ECO:0007669"/>
    <property type="project" value="UniProtKB-UniPathway"/>
</dbReference>
<dbReference type="GO" id="GO:0019557">
    <property type="term" value="P:L-histidine catabolic process to glutamate and formate"/>
    <property type="evidence" value="ECO:0007669"/>
    <property type="project" value="UniProtKB-UniPathway"/>
</dbReference>
<dbReference type="CDD" id="cd00332">
    <property type="entry name" value="PAL-HAL"/>
    <property type="match status" value="1"/>
</dbReference>
<dbReference type="FunFam" id="1.10.275.10:FF:000005">
    <property type="entry name" value="Histidine ammonia-lyase"/>
    <property type="match status" value="1"/>
</dbReference>
<dbReference type="FunFam" id="1.20.200.10:FF:000003">
    <property type="entry name" value="Histidine ammonia-lyase"/>
    <property type="match status" value="1"/>
</dbReference>
<dbReference type="Gene3D" id="1.20.200.10">
    <property type="entry name" value="Fumarase/aspartase (Central domain)"/>
    <property type="match status" value="1"/>
</dbReference>
<dbReference type="Gene3D" id="1.10.275.10">
    <property type="entry name" value="Fumarase/aspartase (N-terminal domain)"/>
    <property type="match status" value="1"/>
</dbReference>
<dbReference type="HAMAP" id="MF_00229">
    <property type="entry name" value="His_ammonia_lyase"/>
    <property type="match status" value="1"/>
</dbReference>
<dbReference type="InterPro" id="IPR001106">
    <property type="entry name" value="Aromatic_Lyase"/>
</dbReference>
<dbReference type="InterPro" id="IPR024083">
    <property type="entry name" value="Fumarase/histidase_N"/>
</dbReference>
<dbReference type="InterPro" id="IPR005921">
    <property type="entry name" value="HutH"/>
</dbReference>
<dbReference type="InterPro" id="IPR008948">
    <property type="entry name" value="L-Aspartase-like"/>
</dbReference>
<dbReference type="InterPro" id="IPR022313">
    <property type="entry name" value="Phe/His_NH3-lyase_AS"/>
</dbReference>
<dbReference type="NCBIfam" id="TIGR01225">
    <property type="entry name" value="hutH"/>
    <property type="match status" value="1"/>
</dbReference>
<dbReference type="NCBIfam" id="NF006871">
    <property type="entry name" value="PRK09367.1"/>
    <property type="match status" value="1"/>
</dbReference>
<dbReference type="PANTHER" id="PTHR10362">
    <property type="entry name" value="HISTIDINE AMMONIA-LYASE"/>
    <property type="match status" value="1"/>
</dbReference>
<dbReference type="Pfam" id="PF00221">
    <property type="entry name" value="Lyase_aromatic"/>
    <property type="match status" value="1"/>
</dbReference>
<dbReference type="SUPFAM" id="SSF48557">
    <property type="entry name" value="L-aspartase-like"/>
    <property type="match status" value="1"/>
</dbReference>
<dbReference type="PROSITE" id="PS00488">
    <property type="entry name" value="PAL_HISTIDASE"/>
    <property type="match status" value="1"/>
</dbReference>
<protein>
    <recommendedName>
        <fullName evidence="1">Histidine ammonia-lyase</fullName>
        <shortName evidence="1">Histidase</shortName>
        <ecNumber evidence="1">4.3.1.3</ecNumber>
    </recommendedName>
</protein>
<evidence type="ECO:0000255" key="1">
    <source>
        <dbReference type="HAMAP-Rule" id="MF_00229"/>
    </source>
</evidence>
<reference key="1">
    <citation type="submission" date="2007-08" db="EMBL/GenBank/DDBJ databases">
        <authorList>
            <consortium name="The Citrobacter koseri Genome Sequencing Project"/>
            <person name="McClelland M."/>
            <person name="Sanderson E.K."/>
            <person name="Porwollik S."/>
            <person name="Spieth J."/>
            <person name="Clifton W.S."/>
            <person name="Latreille P."/>
            <person name="Courtney L."/>
            <person name="Wang C."/>
            <person name="Pepin K."/>
            <person name="Bhonagiri V."/>
            <person name="Nash W."/>
            <person name="Johnson M."/>
            <person name="Thiruvilangam P."/>
            <person name="Wilson R."/>
        </authorList>
    </citation>
    <scope>NUCLEOTIDE SEQUENCE [LARGE SCALE GENOMIC DNA]</scope>
    <source>
        <strain>ATCC BAA-895 / CDC 4225-83 / SGSC4696</strain>
    </source>
</reference>
<keyword id="KW-0963">Cytoplasm</keyword>
<keyword id="KW-0369">Histidine metabolism</keyword>
<keyword id="KW-0456">Lyase</keyword>
<keyword id="KW-1185">Reference proteome</keyword>